<keyword id="KW-0002">3D-structure</keyword>
<keyword id="KW-0007">Acetylation</keyword>
<keyword id="KW-0010">Activator</keyword>
<keyword id="KW-0024">Alternative initiation</keyword>
<keyword id="KW-0963">Cytoplasm</keyword>
<keyword id="KW-0221">Differentiation</keyword>
<keyword id="KW-0238">DNA-binding</keyword>
<keyword id="KW-0325">Glycoprotein</keyword>
<keyword id="KW-1017">Isopeptide bond</keyword>
<keyword id="KW-0488">Methylation</keyword>
<keyword id="KW-0539">Nucleus</keyword>
<keyword id="KW-0597">Phosphoprotein</keyword>
<keyword id="KW-1185">Reference proteome</keyword>
<keyword id="KW-0804">Transcription</keyword>
<keyword id="KW-0805">Transcription regulation</keyword>
<keyword id="KW-0832">Ubl conjugation</keyword>
<evidence type="ECO:0000250" key="1">
    <source>
        <dbReference type="UniProtKB" id="P17676"/>
    </source>
</evidence>
<evidence type="ECO:0000250" key="2">
    <source>
        <dbReference type="UniProtKB" id="P21272"/>
    </source>
</evidence>
<evidence type="ECO:0000255" key="3">
    <source>
        <dbReference type="PROSITE-ProRule" id="PRU00978"/>
    </source>
</evidence>
<evidence type="ECO:0000256" key="4">
    <source>
        <dbReference type="SAM" id="MobiDB-lite"/>
    </source>
</evidence>
<evidence type="ECO:0000269" key="5">
    <source>
    </source>
</evidence>
<evidence type="ECO:0000269" key="6">
    <source>
    </source>
</evidence>
<evidence type="ECO:0000269" key="7">
    <source>
    </source>
</evidence>
<evidence type="ECO:0000269" key="8">
    <source>
    </source>
</evidence>
<evidence type="ECO:0000269" key="9">
    <source>
    </source>
</evidence>
<evidence type="ECO:0000269" key="10">
    <source>
    </source>
</evidence>
<evidence type="ECO:0000269" key="11">
    <source>
    </source>
</evidence>
<evidence type="ECO:0000269" key="12">
    <source>
    </source>
</evidence>
<evidence type="ECO:0000269" key="13">
    <source>
    </source>
</evidence>
<evidence type="ECO:0000269" key="14">
    <source>
    </source>
</evidence>
<evidence type="ECO:0000269" key="15">
    <source>
    </source>
</evidence>
<evidence type="ECO:0000269" key="16">
    <source>
    </source>
</evidence>
<evidence type="ECO:0000269" key="17">
    <source>
    </source>
</evidence>
<evidence type="ECO:0000269" key="18">
    <source>
    </source>
</evidence>
<evidence type="ECO:0000269" key="19">
    <source>
    </source>
</evidence>
<evidence type="ECO:0000269" key="20">
    <source>
    </source>
</evidence>
<evidence type="ECO:0000269" key="21">
    <source>
    </source>
</evidence>
<evidence type="ECO:0000269" key="22">
    <source>
    </source>
</evidence>
<evidence type="ECO:0000269" key="23">
    <source>
    </source>
</evidence>
<evidence type="ECO:0000269" key="24">
    <source>
    </source>
</evidence>
<evidence type="ECO:0000269" key="25">
    <source>
    </source>
</evidence>
<evidence type="ECO:0000269" key="26">
    <source>
    </source>
</evidence>
<evidence type="ECO:0000269" key="27">
    <source>
    </source>
</evidence>
<evidence type="ECO:0000269" key="28">
    <source>
    </source>
</evidence>
<evidence type="ECO:0000269" key="29">
    <source>
    </source>
</evidence>
<evidence type="ECO:0000269" key="30">
    <source>
    </source>
</evidence>
<evidence type="ECO:0000269" key="31">
    <source>
    </source>
</evidence>
<evidence type="ECO:0000269" key="32">
    <source>
    </source>
</evidence>
<evidence type="ECO:0000303" key="33">
    <source>
    </source>
</evidence>
<evidence type="ECO:0000305" key="34"/>
<evidence type="ECO:0000305" key="35">
    <source>
    </source>
</evidence>
<evidence type="ECO:0000305" key="36">
    <source>
    </source>
</evidence>
<evidence type="ECO:0000305" key="37">
    <source>
    </source>
</evidence>
<evidence type="ECO:0000312" key="38">
    <source>
        <dbReference type="MGI" id="MGI:88373"/>
    </source>
</evidence>
<evidence type="ECO:0007744" key="39">
    <source>
    </source>
</evidence>
<evidence type="ECO:0007829" key="40">
    <source>
        <dbReference type="PDB" id="1CI6"/>
    </source>
</evidence>
<comment type="function">
    <text evidence="1 2 5 8 9 12 13 14 15 16 17 20 21 23 24 27 28 30 31 33">Important transcription factor regulating the expression of genes involved in immune and inflammatory responses (PubMed:16585579, PubMed:17911624, PubMed:18486321, PubMed:20111005). Also plays a significant role in adipogenesis, as well as in the gluconeogenic pathway, liver regeneration, and hematopoiesis (PubMed:10635333, PubMed:17301242, PubMed:17601773, PubMed:19478079, PubMed:24061474, PubMed:24216764, PubMed:9727068). The consensus recognition site is 5'-T[TG]NNGNAA[TG]-3'. Its functional capacity is governed by protein interactions and post-translational protein modifications. During early embryogenesis, plays essential and redundant roles with CEBPA (PubMed:15509779). Has a promitotic effect on many cell types such as hepatocytes and adipocytes but has an antiproliferative effect on T-cells by repressing MYC expression, facilitating differentiation along the T-helper 2 lineage (PubMed:10635333, PubMed:16585579, PubMed:9727068). Binds to regulatory regions of several acute-phase and cytokines genes and plays a role in the regulation of acute-phase reaction and inflammation. Also plays a role in intracellular bacteria killing (PubMed:17911624). During adipogenesis, is rapidly expressed and, after activation by phosphorylation, induces CEBPA and PPARG, which turn on the series of adipocyte genes that give rise to the adipocyte phenotype. The delayed transactivation of the CEBPA and PPARG genes by CEBPB appears necessary to allow mitotic clonal expansion and thereby progression of terminal differentiation (PubMed:15985551, PubMed:17301242, PubMed:17601773, PubMed:20194620). Essential for female reproduction because of a critical role in ovarian follicle development (PubMed:9303532). Restricts osteoclastogenesis (PubMed:19440205). Together with NFE2L1; represses expression of DSPP during odontoblast differentiation (By similarity).</text>
</comment>
<comment type="function">
    <molecule>Isoform 2</molecule>
    <text evidence="16">Essential for gene expression induction in activated macrophages. Plays a major role in immune responses such as CD4(+) T-cell response, granuloma formation and endotoxin shock. Not essential for intracellular bacteria killing.</text>
</comment>
<comment type="function">
    <molecule>Isoform 3</molecule>
    <text evidence="1 2 20">Acts as a dominant negative through heterodimerization with isoform 2 (By similarity). Promotes osteoblast differentiation and osteoclastogenesis (PubMed:19440205).</text>
</comment>
<comment type="subunit">
    <text evidence="2 6 7 10 11 14 17 18 19 22 23 25 26 28 29 32">Binds DNA as a homodimer and as a heterodimer. Interacts with ATF4. Binds DNA as a heterodimer with ATF4 (PubMed:11018027). Interacts with MYB; within the complex, MYB and CEBPB bind to different promoter regions (PubMed:11792321). Can form stable heterodimers with CEBPA, CEBPD and CEBPE (By similarity). Interacts with SIX1 (PubMed:27923061). Isoform 2 and isoform 3 also form heterodimers (By similarity). Interacts with TRIM28 and PTGES2 (PubMed:15879117, PubMed:9742105). Interacts with PRDM16 (PubMed:19641492). Interacts with CCDC85B (PubMed:15644333). Forms a complex with THOC5 (PubMed:19015024). Interacts with ZNF638; this interaction increases transcriptional activation (PubMed:21602272). Interacts with CIDEA and CIDEC (PubMed:22245780). Interaction with CIDEA increases transcriptional activation of a subset of CEBPB downstream target genes, including ID2, IGF1, PRLR, SOCS1, SOCS3, XDH. Interaction with CIDEC increases transcriptional activation of SOCS1, SOCS3, TGFB1, TGFBR1, ID2 and XDH. Interacts with DDIT3/CHOP. Interacts with EP300; recruits EP300 to chromatin. Interacts with RORA; the interaction disrupts interaction with EP300 (PubMed:19324970). Interacts (not methylated) with MED23, MED26, SMARCA2, SMARCB1 and SMARCC1 (PubMed:20111005). Interacts with KAT2A and KAT2B (PubMed:17301242). Interacts with ATF5; EP300 is required for ATF5 and CEBPB interaction and DNA binding (PubMed:24216764). Interacts with NFE2L1; the heterodimer represses expression of DSPP during odontoblast differentiation (By similarity).</text>
</comment>
<comment type="interaction">
    <interactant intactId="EBI-1029979">
        <id>P28033</id>
    </interactant>
    <interactant intactId="EBI-6143801">
        <id>Q99PV5</id>
        <label>Bhlhe41</label>
    </interactant>
    <organismsDiffer>false</organismsDiffer>
    <experiments>5</experiments>
</comment>
<comment type="interaction">
    <interactant intactId="EBI-1029979">
        <id>P28033</id>
    </interactant>
    <interactant intactId="EBI-1169080">
        <id>Q09XV5</id>
        <label>Chd8</label>
    </interactant>
    <organismsDiffer>false</organismsDiffer>
    <experiments>2</experiments>
</comment>
<comment type="interaction">
    <interactant intactId="EBI-1029979">
        <id>P28033</id>
    </interactant>
    <interactant intactId="EBI-2943116">
        <id>Q9JHD2</id>
        <label>Kat2a</label>
    </interactant>
    <organismsDiffer>false</organismsDiffer>
    <experiments>5</experiments>
</comment>
<comment type="interaction">
    <interactant intactId="EBI-1029979">
        <id>P28033</id>
    </interactant>
    <interactant intactId="EBI-477430">
        <id>Q92831</id>
        <label>KAT2B</label>
    </interactant>
    <organismsDiffer>true</organismsDiffer>
    <experiments>2</experiments>
</comment>
<comment type="subcellular location">
    <subcellularLocation>
        <location evidence="13 18">Nucleus</location>
    </subcellularLocation>
    <subcellularLocation>
        <location evidence="1">Cytoplasm</location>
    </subcellularLocation>
    <text evidence="1 13">In T-cells when sumoylated drawn to pericentric heterochromatin thereby allowing proliferation (PubMed:16585579). Translocates to the nucleus when phosphorylated at Ser-288 (By similarity).</text>
</comment>
<comment type="alternative products">
    <event type="alternative initiation"/>
    <isoform>
        <id>P28033-1</id>
        <name>1</name>
        <name>a</name>
        <name>C/EBPbeta-FL</name>
        <name>LAP*</name>
        <sequence type="displayed"/>
    </isoform>
    <isoform>
        <id>P28033-3</id>
        <name>2</name>
        <name>b</name>
        <name>C/EBPbeta-LAP</name>
        <sequence type="described" ref="VSP_053977"/>
    </isoform>
    <isoform>
        <id>P28033-2</id>
        <name>3</name>
        <name>c</name>
        <name>C/EBPbeta-LIP</name>
        <sequence type="described" ref="VSP_053976"/>
    </isoform>
</comment>
<comment type="tissue specificity">
    <text evidence="5 13 20 22 30">Abundantly expressed in myoblasts. Enriched in brown adipose tissue (BAT) versus white adipose tissue (WAT). Expressed in hepatocytes (at protein level). Expressed in T lymphocytes (PubMed:16585579). The expression in granulosa cells of antral follicles is induced by luteinizing hormone (PubMed:9303532). Expressed in chondrocytes and osteoblasts (at protein level) (PubMed:19440205).</text>
</comment>
<comment type="developmental stage">
    <text evidence="9 20">At 9.5 dpc, expressed in the chorionic plate and ectoplacental cone. From 10.5 dpc to at least 11.5 dpc, is also expressed in the trophoblast cells of the three placenta layers (PubMed:15509779). Expressed in monocytic precursors but is vanished during differentiation into osteoclasts. The expression increases during osteoblast differentiation (PubMed:19440205).</text>
</comment>
<comment type="induction">
    <text evidence="22">Up-regulated by cold exposure.</text>
</comment>
<comment type="PTM">
    <text evidence="1 13 24 27">Sumoylated by polymeric chains of SUMO2 or SUMO3. Sumoylation at Lys-133 is required for inhibition of T-cells proliferation (PubMed:16585579). In adipocytes, sumoylation at Lys-133 by PIAS1 leads to ubiquitination and subsequent proteasomal degradation (PubMed:24061474). Desumoylated by SENP2, which abolishes ubiquitination and stabilizes protein levels (PubMed:20194620).</text>
</comment>
<comment type="PTM">
    <text evidence="27">Ubiquitinated, leading to proteasomal degradation.</text>
</comment>
<comment type="PTM">
    <text evidence="1 8 12 15">Phosphorylated at Thr-188 by MAPK and CDK2, serves to prime phosphorylation at Thr-179 and Ser-184 by GSK3B and acquire DNA-binding as well as transactivation activities, required to induce adipogenesis. MAPK and CDK2 act sequentially to maintain Thr-188 in the primed phosphorylated state during mitotical cloning expansion and thereby progression of terminal differentiation. Phosphorylation at Thr-217 enhances transactivation activity. Phosphorylation at Ser-276 in response to calcium increases transactivation activity (PubMed:1314426). Phosphorylated at Thr-188 by RPS6KA1 (By similarity).</text>
</comment>
<comment type="PTM">
    <text evidence="21">O-glycosylated, glycosylation at Ser-180 and Ser-181 prevents phosphorylation on Thr-188, Ser-184 and Thr-179 and DNA binding activity which delays the adipocyte differentiation program.</text>
</comment>
<comment type="PTM">
    <text evidence="14 17">Acetylated. Acetylation at Lys-39 is an important and dynamic regulatory event that contributes to its ability to transactivate target genes, including those associated with adipogenesis and adipocyte function. Deacetylation by HDAC1 represses its transactivation activity (PubMed:18486321). Acetylated by KAT2A and KAT2B within a cluster of lysine residues between amino acids 98-102, this acetylation is strongly induced by glucocorticoid treatment and enhances transactivation activity (PubMed:17301242).</text>
</comment>
<comment type="PTM">
    <text evidence="23 37">Methylated. Methylation at Arg-3 by CARM1 and at Lys-39 by EHMT2, inhibits transactivation activity. Methylation is probably inhibited by phosphorylation at Thr-188.</text>
</comment>
<comment type="disruption phenotype">
    <text evidence="9 16 20 22 30 31">Embryos display defects in brown fat tissue development (PubMed:19641492). Females are sterile, ovaries lack corpora lutea (PubMed:9303532). Upon bacterial infection, animals show impaired bactericidal activity and die within 3 days (PubMed:17911624). Posthepatectomy, animals show a reduced regenerative response with DNA synthesis decreased to 25% of normal in hepatocytes and a prolonged period of hypoglycemia (PubMed:9727068). Animals show osteopenia with decreased bone formation and enhanced ostecolastogenesis. Long bones have a 1.6 fold diminished bone volume with a reduction of the number and thickness of bone trabeculae (PubMed:19440205). Mutants of isoform 2 show impaired CSF3/G-CSF production by macrophages, IFNG production by CD4(+) T-cells and granuloma formation in liver. Upon bacterial infection, mutants of isoform 2 die within 6 days. Resistant to LPS-induced endotoxin shock (PubMed:17911624). Double knockout CEBPA and CEBPB results in embryonic developmental arrest and death at around 10 dpc to 11 dpc, associated with a gross placenta failure (PubMed:15509779).</text>
</comment>
<comment type="miscellaneous">
    <molecule>Isoform 2</molecule>
    <text evidence="34">Major isoform.</text>
</comment>
<comment type="similarity">
    <text evidence="34">Belongs to the bZIP family. C/EBP subfamily.</text>
</comment>
<protein>
    <recommendedName>
        <fullName evidence="38">CCAAT/enhancer-binding protein beta</fullName>
        <shortName>C/EBP beta</shortName>
    </recommendedName>
    <alternativeName>
        <fullName>AGP/EBP</fullName>
    </alternativeName>
    <alternativeName>
        <fullName>Interleukin-6-dependent-binding protein</fullName>
        <shortName>IL-6DBP</shortName>
    </alternativeName>
    <alternativeName>
        <fullName>Liver-enriched transcriptional activator</fullName>
        <shortName>LAP</shortName>
    </alternativeName>
</protein>
<gene>
    <name evidence="38" type="primary">Cebpb</name>
</gene>
<proteinExistence type="evidence at protein level"/>
<sequence length="296" mass="31446">MHRLLAWDAACLPPPPAAFRPMEVANFYYEPDCLAYGAKAARAAPRAPAAEPAIGEHERAIDFSPYLEPLAPAADFAAPAPAHHDFLSDLFADDYGAKPSKKPADYGYVSLGRAGAKAAPPACFPPPPPAALKAEPGFEPADCKRADDAPAMAAGFPFALRAYLGYQATPSGSSGSLSTSSSSSPPGTPSPADAKAAPAACFAGPPAAPAKAKAKKTVDKLSDEYKMRRERNNIAVRKSRDKAKMRNLETQHKVLELTAENERLQKKVEQLSRELSTLRNLFKQLPEPLLASAGHC</sequence>
<reference key="1">
    <citation type="journal article" date="1990" name="Mol. Cell. Biol.">
        <title>Molecular cloning of a transcription factor, AGP/EBP, that belongs to members of the C/EBP family.</title>
        <authorList>
            <person name="Chang C.J."/>
            <person name="Chen T.T."/>
            <person name="Lei H.Y."/>
            <person name="Chen D.S."/>
            <person name="Lee S.C."/>
        </authorList>
    </citation>
    <scope>NUCLEOTIDE SEQUENCE [MRNA]</scope>
    <source>
        <strain>BALB/cJ</strain>
        <tissue>Liver</tissue>
    </source>
</reference>
<reference key="2">
    <citation type="journal article" date="1991" name="Genes Dev.">
        <title>Regulated expression of three C/EBP isoforms during adipose conversion of 3T3-L1 cells.</title>
        <authorList>
            <person name="Cao Z."/>
            <person name="Umek R.M."/>
            <person name="McKnight S.L."/>
        </authorList>
    </citation>
    <scope>NUCLEOTIDE SEQUENCE [MRNA]</scope>
</reference>
<reference key="3">
    <citation type="journal article" date="1995" name="DNA Cell Biol.">
        <title>Autoregulated induction of the acute-phase response transcription factor gene, agp/ebp.</title>
        <authorList>
            <person name="Chang C.J."/>
            <person name="Shen B.J."/>
            <person name="Lee S.C."/>
        </authorList>
    </citation>
    <scope>NUCLEOTIDE SEQUENCE [GENOMIC DNA] OF 1-11</scope>
    <source>
        <tissue>Liver</tissue>
    </source>
</reference>
<reference key="4">
    <citation type="journal article" date="1992" name="Science">
        <title>Calcium-regulated phosphorylation within the leucine zipper of C/EBP beta.</title>
        <authorList>
            <person name="Wegner M."/>
            <person name="Cao Z."/>
            <person name="Rosenfeld M.G."/>
        </authorList>
    </citation>
    <scope>FUNCTION</scope>
    <scope>PHOSPHORYLATION AT SER-276</scope>
    <scope>MUTAGENESIS OF SER-276</scope>
</reference>
<reference key="5">
    <citation type="journal article" date="1997" name="Genes Dev.">
        <title>An essential role for C/EBPbeta in female reproduction.</title>
        <authorList>
            <person name="Sterneck E."/>
            <person name="Tessarollo L."/>
            <person name="Johnson P.F."/>
        </authorList>
    </citation>
    <scope>FUNCTION</scope>
    <scope>DISRUPTION PHENOTYPE</scope>
    <scope>TISSUE SPECIFICITY</scope>
</reference>
<reference key="6">
    <citation type="journal article" date="1998" name="J. Clin. Invest.">
        <title>CCAAT enhancer- binding protein beta is required for normal hepatocyte proliferation in mice after partial hepatectomy.</title>
        <authorList>
            <person name="Greenbaum L.E."/>
            <person name="Li W."/>
            <person name="Cressman D.E."/>
            <person name="Peng Y."/>
            <person name="Ciliberto G."/>
            <person name="Poli V."/>
            <person name="Taub R."/>
        </authorList>
    </citation>
    <scope>FUNCTION</scope>
    <scope>DISRUPTION PHENOTYPE</scope>
</reference>
<reference key="7">
    <citation type="journal article" date="1998" name="Mol. Cell. Biol.">
        <title>Coactivator TIF1beta interacts with transcription factor C/EBPbeta and glucocorticoid receptor to induce alpha1-acid glycoprotein gene expression.</title>
        <authorList>
            <person name="Chang C.J."/>
            <person name="Chen Y.L."/>
            <person name="Lee S.C."/>
        </authorList>
    </citation>
    <scope>INTERACTION WITH TRIM28</scope>
</reference>
<reference key="8">
    <citation type="journal article" date="1999" name="Mol. Cell">
        <title>Phosphorylation of rat serine 105 or mouse threonine 217 in C/EBP beta is required for hepatocyte proliferation induced by TGF alpha.</title>
        <authorList>
            <person name="Buck M."/>
            <person name="Poli V."/>
            <person name="van der Geer P."/>
            <person name="Chojkier M."/>
            <person name="Hunter T."/>
        </authorList>
    </citation>
    <scope>FUNCTION</scope>
    <scope>PHOSPHORYLATION AT THR-217</scope>
    <scope>MUTAGENESIS OF THR-217</scope>
</reference>
<reference key="9">
    <citation type="journal article" date="2002" name="Cell">
        <title>Mechanism of c-Myb-C/EBP beta cooperation from separated sites on a promoter.</title>
        <authorList>
            <person name="Tahirov T.H."/>
            <person name="Sato K."/>
            <person name="Ichikawa-Iwata E."/>
            <person name="Sasaki M."/>
            <person name="Inoue-Bungo T."/>
            <person name="Shiina M."/>
            <person name="Kimura K."/>
            <person name="Takata S."/>
            <person name="Fujikawa A."/>
            <person name="Morii H."/>
            <person name="Kumasaka T."/>
            <person name="Yamamoto M."/>
            <person name="Ishii S."/>
            <person name="Ogata K."/>
        </authorList>
    </citation>
    <scope>INTERACTION WITH MYB</scope>
</reference>
<reference key="10">
    <citation type="journal article" date="2004" name="Mol. Cell. Biol.">
        <title>Essential requirement of CCAAT/enhancer binding proteins in embryogenesis.</title>
        <authorList>
            <person name="Begay V."/>
            <person name="Smink J."/>
            <person name="Leutz A."/>
        </authorList>
    </citation>
    <scope>FUNCTION</scope>
    <scope>DEVELOPMENTAL STAGE</scope>
    <scope>DISRUPTION PHENOTYPE</scope>
</reference>
<reference key="11">
    <citation type="journal article" date="2005" name="J. Biol. Chem.">
        <title>Delta-interacting protein A, a new inhibitory partner of CCAAT/enhancer-binding protein beta, implicated in adipocyte differentiation.</title>
        <authorList>
            <person name="Bezy O."/>
            <person name="Elabd C."/>
            <person name="Cochet O."/>
            <person name="Petersen R.K."/>
            <person name="Kristiansen K."/>
            <person name="Dani C."/>
            <person name="Ailhaud G."/>
            <person name="Amri E.-Z."/>
        </authorList>
    </citation>
    <scope>INTERACTION WITH CCDC85B</scope>
</reference>
<reference key="12">
    <citation type="journal article" date="2005" name="J. Immunol.">
        <title>IFN-gamma-stimulated transcriptional activation by IFN-gamma-activated transcriptional element-binding factor 1 occurs via an inducible interaction with CAAAT/enhancer-binding protein-beta.</title>
        <authorList>
            <person name="Meng Q."/>
            <person name="Raha A."/>
            <person name="Roy S."/>
            <person name="Hu J."/>
            <person name="Kalvakolanu D.V."/>
        </authorList>
    </citation>
    <scope>INTERACTION WITH PTGES2</scope>
</reference>
<reference key="13">
    <citation type="journal article" date="2005" name="Proc. Natl. Acad. Sci. U.S.A.">
        <title>Sequential phosphorylation of CCAAT enhancer-binding protein beta by MAPK and glycogen synthase kinase 3beta is required for adipogenesis.</title>
        <authorList>
            <person name="Tang Q.Q."/>
            <person name="Gronborg M."/>
            <person name="Huang H."/>
            <person name="Kim J.W."/>
            <person name="Otto T.C."/>
            <person name="Pandey A."/>
            <person name="Lane M.D."/>
        </authorList>
    </citation>
    <scope>FUNCTION</scope>
    <scope>PHOSPHORYLATION AT THR-179; SER-184 AND THR-188</scope>
    <scope>DNA-BINDING</scope>
    <scope>MUTAGENESIS OF THR-179; SER-184 AND THR-188</scope>
    <scope>IDENTIFICATION BY MASS SPECTROMETRY</scope>
    <scope>TISSUE SPECIFICITY</scope>
</reference>
<reference key="14">
    <citation type="journal article" date="2006" name="J. Immunol.">
        <title>SUMOylation interferes with CCAAT/enhancer-binding protein beta-mediated c-myc repression, but not IL-4 activation in T cells.</title>
        <authorList>
            <person name="Berberich-Siebelt F."/>
            <person name="Berberich I."/>
            <person name="Andrulis M."/>
            <person name="Santner-Nanan B."/>
            <person name="Jha M.K."/>
            <person name="Klein-Hessling S."/>
            <person name="Schimpl A."/>
            <person name="Serfling E."/>
        </authorList>
    </citation>
    <scope>FUNCTION</scope>
    <scope>SUMOYLATION AT LYS-133</scope>
    <scope>TISSUE SPECIFICITY</scope>
    <scope>MUTAGENESIS OF LYS-133</scope>
    <scope>SUBCELLULAR LOCATION</scope>
</reference>
<reference key="15">
    <citation type="journal article" date="2007" name="J. Immunol.">
        <title>The C/EBP beta isoform 34-kDa LAP is responsible for NF-IL-6-mediated gene induction in activated macrophages, but is not essential for intracellular bacteria killing.</title>
        <authorList>
            <person name="Uematsu S."/>
            <person name="Kaisho T."/>
            <person name="Tanaka T."/>
            <person name="Matsumoto M."/>
            <person name="Yamakami M."/>
            <person name="Omori H."/>
            <person name="Yamamoto M."/>
            <person name="Yoshimori T."/>
            <person name="Akira S."/>
        </authorList>
    </citation>
    <scope>FUNCTION</scope>
    <scope>DISRUPTION PHENOTYPE</scope>
    <scope>ALTERNATIVE INITIATION</scope>
</reference>
<reference key="16">
    <citation type="journal article" date="2007" name="Proc. Natl. Acad. Sci. U.S.A.">
        <title>Glucocorticoid-stimulated preadipocyte differentiation is mediated through acetylation of C/EBPbeta by GCN5.</title>
        <authorList>
            <person name="Wiper-Bergeron N."/>
            <person name="Salem H.A."/>
            <person name="Tomlinson J.J."/>
            <person name="Wu D."/>
            <person name="Hache R.J."/>
        </authorList>
    </citation>
    <scope>FUNCTION</scope>
    <scope>ACETYLATION AT LYS-98; LYS-101 AND LYS-102</scope>
    <scope>INTERACTION WITH KAT2A AND KAT2B</scope>
    <scope>MUTAGENESIS OF LYS-98; LYS-101 AND LYS-102</scope>
</reference>
<reference key="17">
    <citation type="journal article" date="2007" name="Proc. Natl. Acad. Sci. U.S.A.">
        <title>Role of cdk2 in the sequential phosphorylation/activation of C/EBPbeta during adipocyte differentiation.</title>
        <authorList>
            <person name="Li X."/>
            <person name="Kim J.W."/>
            <person name="Gronborg M."/>
            <person name="Urlaub H."/>
            <person name="Lane M.D."/>
            <person name="Tang Q.Q."/>
        </authorList>
    </citation>
    <scope>FUNCTION</scope>
    <scope>PHOSPHORYLATION AT THR-179; SER-184 AND THR-188</scope>
    <scope>IDENTIFICATION BY MASS SPECTROMETRY</scope>
</reference>
<reference key="18">
    <citation type="journal article" date="2008" name="J. Biol. Chem.">
        <title>G9a-mediated lysine methylation alters the function of CCAAT/enhancer-binding protein-beta.</title>
        <authorList>
            <person name="Pless O."/>
            <person name="Kowenz-Leutz E."/>
            <person name="Knoblich M."/>
            <person name="Lausen J."/>
            <person name="Beyermann M."/>
            <person name="Walsh M.J."/>
            <person name="Leutz A."/>
        </authorList>
    </citation>
    <scope>METHYLATION AT LYS-39</scope>
</reference>
<reference key="19">
    <citation type="journal article" date="2008" name="Mol. Cell. Endocrinol.">
        <title>Acetylation and deacetylation regulate CCAAT/enhancer binding protein beta at K39 in mediating gene transcription.</title>
        <authorList>
            <person name="Cesena T.I."/>
            <person name="Cui T.X."/>
            <person name="Subramanian L."/>
            <person name="Fulton C.T."/>
            <person name="Iniguez-Lluhi J.A."/>
            <person name="Kwok R.P."/>
            <person name="Schwartz J."/>
        </authorList>
    </citation>
    <scope>FUNCTION</scope>
    <scope>INTERACTION WITH EP300</scope>
    <scope>MUTAGENESIS OF LYS-39; LYS-98 AND LYS-215</scope>
    <scope>ACETYLATION AT LYS-39</scope>
</reference>
<reference key="20">
    <citation type="journal article" date="2009" name="Cell. Signal.">
        <title>THOC5 couples M-CSF receptor signaling to transcription factor expression.</title>
        <authorList>
            <person name="Carney L."/>
            <person name="Pierce A."/>
            <person name="Rijnen M."/>
            <person name="Gonzalez Sanchez M.B."/>
            <person name="Hamzah H.G."/>
            <person name="Zhang L."/>
            <person name="Tamura T."/>
            <person name="Whetton A.D."/>
        </authorList>
    </citation>
    <scope>SUBCELLULAR LOCATION</scope>
    <scope>COMPLEX FORMATION WITH THOC5</scope>
</reference>
<reference key="21">
    <citation type="journal article" date="2009" name="EMBO J.">
        <title>Transcription factor C/EBPbeta isoform ratio regulates osteoclastogenesis through MafB.</title>
        <authorList>
            <person name="Smink J.J."/>
            <person name="Begay V."/>
            <person name="Schoenmaker T."/>
            <person name="Sterneck E."/>
            <person name="de Vries T.J."/>
            <person name="Leutz A."/>
        </authorList>
    </citation>
    <scope>FUNCTION (ISOFORM 1 AND ISOFORM 3)</scope>
    <scope>TISSUE SPECIFICITY</scope>
    <scope>DEVELOPMENTAL STAGE</scope>
    <scope>DISRUPTION PHENOTYPE</scope>
</reference>
<reference key="22">
    <citation type="journal article" date="2009" name="J. Biol. Chem.">
        <title>O-linked N-acetylglucosamine modification on CCAAT enhancer-binding protein beta: role during adipocyte differentiation.</title>
        <authorList>
            <person name="Li X."/>
            <person name="Molina H."/>
            <person name="Huang H."/>
            <person name="Zhang Y.Y."/>
            <person name="Liu M."/>
            <person name="Qian S.W."/>
            <person name="Slawson C."/>
            <person name="Dias W.B."/>
            <person name="Pandey A."/>
            <person name="Hart G.W."/>
            <person name="Lane M.D."/>
            <person name="Tang Q.Q."/>
        </authorList>
    </citation>
    <scope>FUNCTION</scope>
    <scope>GLYCOSYLATION AT SER-180 AND SER-181</scope>
    <scope>MUTAGENESIS OF SER-180 AND SER-181</scope>
    <scope>IDENTIFICATION BY MASS SPECTROMETRY</scope>
    <scope>PHOSPHORYLATION AT THR-179; SER-184 AND THR-188</scope>
</reference>
<reference key="23">
    <citation type="journal article" date="2009" name="Mol. Endocrinol.">
        <title>The orphan nuclear receptor RORalpha restrains adipocyte differentiation through a reduction of C/EBPbeta activity and perilipin gene expression.</title>
        <authorList>
            <person name="Ohoka N."/>
            <person name="Kato S."/>
            <person name="Takahashi Y."/>
            <person name="Hayashi H."/>
            <person name="Sato R."/>
        </authorList>
    </citation>
    <scope>FUNCTION IN ADIPOGENESIS</scope>
    <scope>INTERACTION WITH EP300 AND RORA</scope>
    <scope>ALTERNATIVE SPLICING (ISOFORMS 2 AND 3)</scope>
    <scope>PHOSPHORYLATION AT THR-188</scope>
</reference>
<reference key="24">
    <citation type="journal article" date="2009" name="Nature">
        <title>Initiation of myoblast to brown fat switch by a PRDM16-C/EBP-beta transcriptional complex.</title>
        <authorList>
            <person name="Kajimura S."/>
            <person name="Seale P."/>
            <person name="Kubota K."/>
            <person name="Lunsford E."/>
            <person name="Frangioni J.V."/>
            <person name="Gygi S.P."/>
            <person name="Spiegelman B.M."/>
        </authorList>
    </citation>
    <scope>IDENTIFICATION BY MASS SPECTROMETRY</scope>
    <scope>FUNCTION</scope>
    <scope>DISRUPTION PHENOTYPE</scope>
    <scope>INTERACTION WITH PRDM16</scope>
    <scope>INDUCTION BY COLD EXPOSURE</scope>
    <scope>TISSUE SPECIFICITY</scope>
</reference>
<reference key="25">
    <citation type="journal article" date="2010" name="Cell">
        <title>A tissue-specific atlas of mouse protein phosphorylation and expression.</title>
        <authorList>
            <person name="Huttlin E.L."/>
            <person name="Jedrychowski M.P."/>
            <person name="Elias J.E."/>
            <person name="Goswami T."/>
            <person name="Rad R."/>
            <person name="Beausoleil S.A."/>
            <person name="Villen J."/>
            <person name="Haas W."/>
            <person name="Sowa M.E."/>
            <person name="Gygi S.P."/>
        </authorList>
    </citation>
    <scope>PHOSPHORYLATION [LARGE SCALE ANALYSIS] AT SER-184 AND THR-188</scope>
    <scope>IDENTIFICATION BY MASS SPECTROMETRY [LARGE SCALE ANALYSIS]</scope>
    <source>
        <tissue>Brown adipose tissue</tissue>
        <tissue>Lung</tissue>
    </source>
</reference>
<reference key="26">
    <citation type="journal article" date="2010" name="EMBO J.">
        <title>Crosstalk between C/EBPbeta phosphorylation, arginine methylation, and SWI/SNF/Mediator implies an indexing transcription factor code.</title>
        <authorList>
            <person name="Kowenz-Leutz E."/>
            <person name="Pless O."/>
            <person name="Dittmar G."/>
            <person name="Knoblich M."/>
            <person name="Leutz A."/>
        </authorList>
    </citation>
    <scope>FUNCTION</scope>
    <scope>INTERACTION WITH MED23; MED26; SMARCA2; SMARCB1 AND SMARCC1</scope>
    <scope>IDENTIFICATION BY MASS SPECTROMETRY</scope>
    <scope>METHYLATION AT ARG-3</scope>
</reference>
<reference key="27">
    <citation type="journal article" date="2010" name="Mol. Cell. Biol.">
        <title>Control of adipogenesis by the SUMO-specific protease SENP2.</title>
        <authorList>
            <person name="Chung S.S."/>
            <person name="Ahn B.Y."/>
            <person name="Kim M."/>
            <person name="Choi H.H."/>
            <person name="Park H.S."/>
            <person name="Kang S."/>
            <person name="Park S.G."/>
            <person name="Kim Y.B."/>
            <person name="Cho Y.M."/>
            <person name="Lee H.K."/>
            <person name="Chung C.H."/>
            <person name="Park K.S."/>
        </authorList>
    </citation>
    <scope>FUNCTION</scope>
    <scope>SUMOYLATION AT LYS-133</scope>
    <scope>DESUMOYLATION AT LYS-133</scope>
    <scope>MUTAGENESIS OF LYS-133 AND GLU-135</scope>
    <scope>UBIQUITINATION</scope>
</reference>
<reference key="28">
    <citation type="journal article" date="2011" name="J. Biol. Chem.">
        <title>Regulation of adipocyte differentiation by the zinc finger protein ZNF638.</title>
        <authorList>
            <person name="Meruvu S."/>
            <person name="Hugendubler L."/>
            <person name="Mueller E."/>
        </authorList>
    </citation>
    <scope>INTERACTION WITH ZNF638</scope>
</reference>
<reference key="29">
    <citation type="journal article" date="2012" name="Nat. Med.">
        <title>Cidea is an essential transcriptional coactivator regulating mammary gland secretion of milk lipids.</title>
        <authorList>
            <person name="Wang W."/>
            <person name="Lv N."/>
            <person name="Zhang S."/>
            <person name="Shui G."/>
            <person name="Qian H."/>
            <person name="Zhang J."/>
            <person name="Chen Y."/>
            <person name="Ye J."/>
            <person name="Xie Y."/>
            <person name="Shen Y."/>
            <person name="Wenk M.R."/>
            <person name="Li P."/>
        </authorList>
    </citation>
    <scope>INTERACTION WITH CIDEA AND CIDEC</scope>
</reference>
<reference key="30">
    <citation type="journal article" date="2013" name="Mol. Cell. Biol.">
        <title>Protein inhibitor of activated STAT 1 (PIAS1) is identified as the SUMO E3 ligase of CCAAT/enhancer-binding protein beta (C/EBPbeta) during adipogenesis.</title>
        <authorList>
            <person name="Liu Y."/>
            <person name="Zhang Y.D."/>
            <person name="Guo L."/>
            <person name="Huang H.Y."/>
            <person name="Zhu H."/>
            <person name="Huang J.X."/>
            <person name="Liu Y."/>
            <person name="Zhou S.R."/>
            <person name="Dang Y.J."/>
            <person name="Li X."/>
            <person name="Tang Q.Q."/>
        </authorList>
    </citation>
    <scope>FUNCTION</scope>
    <scope>SUMOYLATION AT LYS-133</scope>
    <scope>MUTAGENESIS OF LYS-133</scope>
    <scope>UBIQUITINATION</scope>
</reference>
<reference key="31">
    <citation type="journal article" date="2014" name="Mol. Cell. Biol.">
        <title>p300-dependent acetylation of activating transcription factor 5 enhances C/EBPbeta transactivation of C/EBPalpha during 3T3-L1 differentiation.</title>
        <authorList>
            <person name="Zhao Y."/>
            <person name="Zhang Y.D."/>
            <person name="Zhang Y.Y."/>
            <person name="Qian S.W."/>
            <person name="Zhang Z.C."/>
            <person name="Li S.F."/>
            <person name="Guo L."/>
            <person name="Liu Y."/>
            <person name="Wen B."/>
            <person name="Lei Q.Y."/>
            <person name="Tang Q.Q."/>
            <person name="Li X."/>
        </authorList>
    </citation>
    <scope>FUNCTION</scope>
    <scope>INTERACTION WITH ATF5 AND EP300</scope>
</reference>
<reference key="32">
    <citation type="journal article" date="2015" name="J. Biol. Chem.">
        <title>Transcriptional Regulation of Adipocyte Differentiation: A Central Role for CCAAT/Enhancer-binding Protein (C/EBP) beta.</title>
        <authorList>
            <person name="Guo L."/>
            <person name="Li X."/>
            <person name="Tang Q."/>
        </authorList>
    </citation>
    <scope>REVIEW OF PTMS AND FUNCTION</scope>
</reference>
<reference key="33">
    <citation type="journal article" date="2016" name="PLoS Genet.">
        <title>Comparative Transcriptomic and Epigenomic Analyses Reveal New Regulators of Murine Brown Adipogenesis.</title>
        <authorList>
            <person name="Brunmeir R."/>
            <person name="Wu J."/>
            <person name="Peng X."/>
            <person name="Kim S.Y."/>
            <person name="Julien S.G."/>
            <person name="Zhang Q."/>
            <person name="Xie W."/>
            <person name="Xu F."/>
        </authorList>
    </citation>
    <scope>INTERACTION WITH SIX1</scope>
</reference>
<reference key="34">
    <citation type="journal article" date="2001" name="J. Biol. Chem.">
        <title>Crystal structure of the CCAAT box/enhancer-binding protein beta activating transcription factor-4 basic leucine zipper heterodimer in the absence of DNA.</title>
        <authorList>
            <person name="Podust L.M."/>
            <person name="Krezel A.M."/>
            <person name="Kim Y."/>
        </authorList>
    </citation>
    <scope>X-RAY CRYSTALLOGRAPHY (2.60 ANGSTROMS) OF 224-285 IN COMPLEX WITH ATF4</scope>
    <scope>INTERACTION WITH ATF4</scope>
    <scope>DNA-BINDING</scope>
</reference>
<feature type="chain" id="PRO_0000076618" description="CCAAT/enhancer-binding protein beta">
    <location>
        <begin position="1"/>
        <end position="296"/>
    </location>
</feature>
<feature type="domain" description="bZIP" evidence="3">
    <location>
        <begin position="222"/>
        <end position="285"/>
    </location>
</feature>
<feature type="region of interest" description="Required for Lys-133 sumoylation" evidence="1">
    <location>
        <begin position="1"/>
        <end position="22"/>
    </location>
</feature>
<feature type="region of interest" description="Required for MYC transcriptional repression" evidence="13">
    <location>
        <begin position="22"/>
        <end position="104"/>
    </location>
</feature>
<feature type="region of interest" description="Disordered" evidence="4">
    <location>
        <begin position="171"/>
        <end position="199"/>
    </location>
</feature>
<feature type="region of interest" description="Basic motif" evidence="3">
    <location>
        <begin position="226"/>
        <end position="246"/>
    </location>
</feature>
<feature type="region of interest" description="Leucine-zipper" evidence="3">
    <location>
        <begin position="248"/>
        <end position="255"/>
    </location>
</feature>
<feature type="modified residue" description="Asymmetric dimethylarginine; by CARM1" evidence="23">
    <location>
        <position position="3"/>
    </location>
</feature>
<feature type="modified residue" description="N6-acetyllysine; alternate" evidence="17">
    <location>
        <position position="39"/>
    </location>
</feature>
<feature type="modified residue" description="N6-methylated lysine; alternate" evidence="37">
    <location>
        <position position="39"/>
    </location>
</feature>
<feature type="modified residue" description="N6-acetyllysine; by KAT2A and KAT2B" evidence="36">
    <location>
        <position position="98"/>
    </location>
</feature>
<feature type="modified residue" description="N6-acetyllysine; by KAT2A and KAT2B" evidence="36">
    <location>
        <position position="101"/>
    </location>
</feature>
<feature type="modified residue" description="N6-acetyllysine; by KAT2A and KAT2B; alternate" evidence="36">
    <location>
        <position position="102"/>
    </location>
</feature>
<feature type="modified residue" description="Phosphothreonine; by GSK3-beta" evidence="12 15 21">
    <location>
        <position position="179"/>
    </location>
</feature>
<feature type="modified residue" description="Phosphoserine; by GSK3-beta" evidence="12 15 21 39">
    <location>
        <position position="184"/>
    </location>
</feature>
<feature type="modified residue" description="Phosphothreonine; by RPS6KA1, CDK2 and MAPK" evidence="12 15 19 21 39">
    <location>
        <position position="188"/>
    </location>
</feature>
<feature type="modified residue" description="Phosphothreonine; by RPS6KA1 and PKC/PRKCA" evidence="5">
    <location>
        <position position="217"/>
    </location>
</feature>
<feature type="modified residue" description="Phosphoserine; by PKC/PRKCA" evidence="1">
    <location>
        <position position="239"/>
    </location>
</feature>
<feature type="modified residue" description="Phosphoserine; by CaMK2" evidence="35">
    <location>
        <position position="276"/>
    </location>
</feature>
<feature type="glycosylation site" description="O-linked (GlcNAc) serine" evidence="21">
    <location>
        <position position="180"/>
    </location>
</feature>
<feature type="glycosylation site" description="O-linked (GlcNAc) serine" evidence="21">
    <location>
        <position position="181"/>
    </location>
</feature>
<feature type="cross-link" description="Glycyl lysine isopeptide (Lys-Gly) (interchain with G-Cter in SUMO2); alternate" evidence="1">
    <location>
        <position position="102"/>
    </location>
</feature>
<feature type="cross-link" description="Glycyl lysine isopeptide (Lys-Gly) (interchain with G-Cter in SUMO); alternate" evidence="13 24 27">
    <location>
        <position position="133"/>
    </location>
</feature>
<feature type="cross-link" description="Glycyl lysine isopeptide (Lys-Gly) (interchain with G-Cter in SUMO2); alternate" evidence="1">
    <location>
        <position position="133"/>
    </location>
</feature>
<feature type="cross-link" description="Glycyl lysine isopeptide (Lys-Gly) (interchain with G-Cter in SUMO2)" evidence="1">
    <location>
        <position position="144"/>
    </location>
</feature>
<feature type="cross-link" description="Glycyl lysine isopeptide (Lys-Gly) (interchain with G-Cter in SUMO2)" evidence="1">
    <location>
        <position position="211"/>
    </location>
</feature>
<feature type="cross-link" description="Glycyl lysine isopeptide (Lys-Gly) (interchain with G-Cter in SUMO2)" evidence="1">
    <location>
        <position position="213"/>
    </location>
</feature>
<feature type="cross-link" description="Glycyl lysine isopeptide (Lys-Gly) (interchain with G-Cter in SUMO2)" evidence="1">
    <location>
        <position position="283"/>
    </location>
</feature>
<feature type="splice variant" id="VSP_053976" description="In isoform 3." evidence="34">
    <location>
        <begin position="1"/>
        <end position="151"/>
    </location>
</feature>
<feature type="splice variant" id="VSP_053977" description="In isoform 2." evidence="34">
    <location>
        <begin position="1"/>
        <end position="21"/>
    </location>
</feature>
<feature type="mutagenesis site" description="No effect on interaction with EP300." evidence="17">
    <original>K</original>
    <variation>A</variation>
    <variation>Q</variation>
    <location>
        <position position="39"/>
    </location>
</feature>
<feature type="mutagenesis site" description="Dominant negative. Loss of transactivation activity. No effect on interaction with EP300." evidence="17">
    <original>K</original>
    <variation>R</variation>
    <location>
        <position position="39"/>
    </location>
</feature>
<feature type="mutagenesis site" description="No effect on transactivation activity. Not acetylated after glucocorticoid-stimulation and no increase of transactivation activity; when associated with R-101 and R-102." evidence="14 17">
    <original>K</original>
    <variation>R</variation>
    <location>
        <position position="98"/>
    </location>
</feature>
<feature type="mutagenesis site" description="Not acetylated after glucocorticoid-stimulation and no increase of transactivation activity; when associated with R-98 and R-102." evidence="14">
    <original>K</original>
    <variation>R</variation>
    <location>
        <position position="101"/>
    </location>
</feature>
<feature type="mutagenesis site" description="Not acetylated and no increase of transactivation activity after glucocorticoid-stimulation; when associated with R-98 and R-101." evidence="14">
    <original>K</original>
    <variation>R</variation>
    <location>
        <position position="102"/>
    </location>
</feature>
<feature type="mutagenesis site" description="Not sumoylated. Decreases ubiquitination and increases stability. Loss of proliferation inhibition in T cells. No effect on transactivation activity." evidence="13 24 27">
    <original>K</original>
    <variation>R</variation>
    <location>
        <position position="133"/>
    </location>
</feature>
<feature type="mutagenesis site" description="Not sumoylated and not ubiquitinated." evidence="24">
    <original>E</original>
    <variation>A</variation>
    <location>
        <position position="135"/>
    </location>
</feature>
<feature type="mutagenesis site" description="Disruption of phosphorylation by MAPK and GSK3B, acquisition of DNA-binding activity and transactivation function; when associated with A-184 and A-188." evidence="12">
    <original>T</original>
    <variation>A</variation>
    <location>
        <position position="179"/>
    </location>
</feature>
<feature type="mutagenesis site" description="Highly increases transactivation activity; when associated with A-181." evidence="21">
    <original>S</original>
    <variation>A</variation>
    <location>
        <position position="180"/>
    </location>
</feature>
<feature type="mutagenesis site" description="Highly increases transactivation activity; when associated with A-180." evidence="21">
    <original>S</original>
    <variation>A</variation>
    <location>
        <position position="181"/>
    </location>
</feature>
<feature type="mutagenesis site" description="Disruption of phosphorylation by MAPK and GSK3B, acquisition of DNA-binding activity and transactivation function; when associated with A-179 and A-188." evidence="12">
    <original>S</original>
    <variation>A</variation>
    <location>
        <position position="184"/>
    </location>
</feature>
<feature type="mutagenesis site" description="Disruption of phosphorylation by MAPK and GSK3B, acquisition of DNA-binding activity and transactivation function; when associated with A-179 and A-184." evidence="12">
    <original>T</original>
    <variation>A</variation>
    <location>
        <position position="188"/>
    </location>
</feature>
<feature type="mutagenesis site" description="No effect on transactivation activity." evidence="17">
    <original>K</original>
    <variation>R</variation>
    <location>
        <position position="215"/>
    </location>
</feature>
<feature type="mutagenesis site" description="Loss of hepatocyte proliferation induction by TGFA." evidence="5">
    <original>T</original>
    <variation>A</variation>
    <location>
        <position position="217"/>
    </location>
</feature>
<feature type="mutagenesis site" description="Induces hepatocyte proliferation." evidence="5">
    <original>T</original>
    <variation>E</variation>
    <location>
        <position position="217"/>
    </location>
</feature>
<feature type="mutagenesis site" description="Reduces phosphorylation in response to calcium." evidence="8">
    <original>S</original>
    <variation>A</variation>
    <location>
        <position position="276"/>
    </location>
</feature>
<feature type="helix" evidence="40">
    <location>
        <begin position="240"/>
        <end position="282"/>
    </location>
</feature>
<accession>P28033</accession>
<name>CEBPB_MOUSE</name>
<dbReference type="EMBL" id="M61007">
    <property type="protein sequence ID" value="AAA37192.1"/>
    <property type="molecule type" value="mRNA"/>
</dbReference>
<dbReference type="EMBL" id="X62600">
    <property type="protein sequence ID" value="CAA44484.1"/>
    <property type="molecule type" value="mRNA"/>
</dbReference>
<dbReference type="EMBL" id="S78572">
    <property type="status" value="NOT_ANNOTATED_CDS"/>
    <property type="molecule type" value="Genomic_DNA"/>
</dbReference>
<dbReference type="CCDS" id="CCDS17105.1">
    <molecule id="P28033-1"/>
</dbReference>
<dbReference type="PIR" id="A36366">
    <property type="entry name" value="A36366"/>
</dbReference>
<dbReference type="RefSeq" id="NP_001274667.1">
    <molecule id="P28033-3"/>
    <property type="nucleotide sequence ID" value="NM_001287738.1"/>
</dbReference>
<dbReference type="RefSeq" id="NP_001274668.1">
    <molecule id="P28033-2"/>
    <property type="nucleotide sequence ID" value="NM_001287739.1"/>
</dbReference>
<dbReference type="RefSeq" id="NP_034013.1">
    <molecule id="P28033-1"/>
    <property type="nucleotide sequence ID" value="NM_009883.4"/>
</dbReference>
<dbReference type="PDB" id="1CI6">
    <property type="method" value="X-ray"/>
    <property type="resolution" value="2.60 A"/>
    <property type="chains" value="B=224-285"/>
</dbReference>
<dbReference type="PDBsum" id="1CI6"/>
<dbReference type="SMR" id="P28033"/>
<dbReference type="BioGRID" id="198669">
    <property type="interactions" value="17"/>
</dbReference>
<dbReference type="ComplexPortal" id="CPX-66">
    <property type="entry name" value="bZIP transcription factor complex, Cebpb-Ddit3"/>
</dbReference>
<dbReference type="ComplexPortal" id="CPX-68">
    <property type="entry name" value="bZIP transcription factor complex, Cebpb-Cebpb"/>
</dbReference>
<dbReference type="ComplexPortal" id="CPX-685">
    <property type="entry name" value="c-Myb-C/EBPbeta complex"/>
</dbReference>
<dbReference type="CORUM" id="P28033"/>
<dbReference type="DIP" id="DIP-37539N"/>
<dbReference type="FunCoup" id="P28033">
    <property type="interactions" value="1513"/>
</dbReference>
<dbReference type="IntAct" id="P28033">
    <property type="interactions" value="16"/>
</dbReference>
<dbReference type="MINT" id="P28033"/>
<dbReference type="STRING" id="10090.ENSMUSP00000069850"/>
<dbReference type="GlyCosmos" id="P28033">
    <property type="glycosylation" value="2 sites, No reported glycans"/>
</dbReference>
<dbReference type="GlyGen" id="P28033">
    <property type="glycosylation" value="4 sites, 1 O-linked glycan (2 sites)"/>
</dbReference>
<dbReference type="iPTMnet" id="P28033"/>
<dbReference type="PhosphoSitePlus" id="P28033"/>
<dbReference type="jPOST" id="P28033"/>
<dbReference type="PaxDb" id="10090-ENSMUSP00000069850"/>
<dbReference type="PeptideAtlas" id="P28033"/>
<dbReference type="ProteomicsDB" id="283878">
    <molecule id="P28033-1"/>
</dbReference>
<dbReference type="ProteomicsDB" id="283879">
    <molecule id="P28033-3"/>
</dbReference>
<dbReference type="ProteomicsDB" id="283880">
    <molecule id="P28033-2"/>
</dbReference>
<dbReference type="Pumba" id="P28033"/>
<dbReference type="Antibodypedia" id="3782">
    <property type="antibodies" value="658 antibodies from 41 providers"/>
</dbReference>
<dbReference type="DNASU" id="12608"/>
<dbReference type="Ensembl" id="ENSMUST00000070642.4">
    <molecule id="P28033-1"/>
    <property type="protein sequence ID" value="ENSMUSP00000069850.4"/>
    <property type="gene ID" value="ENSMUSG00000056501.4"/>
</dbReference>
<dbReference type="GeneID" id="12608"/>
<dbReference type="KEGG" id="mmu:12608"/>
<dbReference type="UCSC" id="uc008oaf.2">
    <molecule id="P28033-1"/>
    <property type="organism name" value="mouse"/>
</dbReference>
<dbReference type="AGR" id="MGI:88373"/>
<dbReference type="CTD" id="1051"/>
<dbReference type="MGI" id="MGI:88373">
    <property type="gene designation" value="Cebpb"/>
</dbReference>
<dbReference type="VEuPathDB" id="HostDB:ENSMUSG00000056501"/>
<dbReference type="eggNOG" id="KOG3119">
    <property type="taxonomic scope" value="Eukaryota"/>
</dbReference>
<dbReference type="GeneTree" id="ENSGT00940000162137"/>
<dbReference type="HOGENOM" id="CLU_043327_1_0_1"/>
<dbReference type="InParanoid" id="P28033"/>
<dbReference type="OMA" id="RLVAWDQ"/>
<dbReference type="OrthoDB" id="10032067at2759"/>
<dbReference type="PhylomeDB" id="P28033"/>
<dbReference type="TreeFam" id="TF105008"/>
<dbReference type="Reactome" id="R-MMU-2559582">
    <property type="pathway name" value="Senescence-Associated Secretory Phenotype (SASP)"/>
</dbReference>
<dbReference type="BioGRID-ORCS" id="12608">
    <property type="hits" value="12 hits in 80 CRISPR screens"/>
</dbReference>
<dbReference type="ChiTaRS" id="Cebpb">
    <property type="organism name" value="mouse"/>
</dbReference>
<dbReference type="EvolutionaryTrace" id="P28033"/>
<dbReference type="PRO" id="PR:P28033"/>
<dbReference type="Proteomes" id="UP000000589">
    <property type="component" value="Chromosome 2"/>
</dbReference>
<dbReference type="RNAct" id="P28033">
    <property type="molecule type" value="protein"/>
</dbReference>
<dbReference type="Bgee" id="ENSMUSG00000056501">
    <property type="expression patterns" value="Expressed in granulocyte and 238 other cell types or tissues"/>
</dbReference>
<dbReference type="ExpressionAtlas" id="P28033">
    <property type="expression patterns" value="baseline and differential"/>
</dbReference>
<dbReference type="GO" id="GO:1990647">
    <property type="term" value="C:C/EBP complex"/>
    <property type="evidence" value="ECO:0000353"/>
    <property type="project" value="ComplexPortal"/>
</dbReference>
<dbReference type="GO" id="GO:0036488">
    <property type="term" value="C:CHOP-C/EBP complex"/>
    <property type="evidence" value="ECO:0000266"/>
    <property type="project" value="ComplexPortal"/>
</dbReference>
<dbReference type="GO" id="GO:0000785">
    <property type="term" value="C:chromatin"/>
    <property type="evidence" value="ECO:0000314"/>
    <property type="project" value="BHF-UCL"/>
</dbReference>
<dbReference type="GO" id="GO:0000779">
    <property type="term" value="C:condensed chromosome, centromeric region"/>
    <property type="evidence" value="ECO:0000314"/>
    <property type="project" value="MGI"/>
</dbReference>
<dbReference type="GO" id="GO:0005737">
    <property type="term" value="C:cytoplasm"/>
    <property type="evidence" value="ECO:0000314"/>
    <property type="project" value="MGI"/>
</dbReference>
<dbReference type="GO" id="GO:0016363">
    <property type="term" value="C:nuclear matrix"/>
    <property type="evidence" value="ECO:0000314"/>
    <property type="project" value="MGI"/>
</dbReference>
<dbReference type="GO" id="GO:0005654">
    <property type="term" value="C:nucleoplasm"/>
    <property type="evidence" value="ECO:0000304"/>
    <property type="project" value="Reactome"/>
</dbReference>
<dbReference type="GO" id="GO:0005634">
    <property type="term" value="C:nucleus"/>
    <property type="evidence" value="ECO:0000314"/>
    <property type="project" value="MGI"/>
</dbReference>
<dbReference type="GO" id="GO:0090575">
    <property type="term" value="C:RNA polymerase II transcription regulator complex"/>
    <property type="evidence" value="ECO:0000314"/>
    <property type="project" value="MGI"/>
</dbReference>
<dbReference type="GO" id="GO:0003682">
    <property type="term" value="F:chromatin binding"/>
    <property type="evidence" value="ECO:0000314"/>
    <property type="project" value="UniProtKB"/>
</dbReference>
<dbReference type="GO" id="GO:0031490">
    <property type="term" value="F:chromatin DNA binding"/>
    <property type="evidence" value="ECO:0000314"/>
    <property type="project" value="MGI"/>
</dbReference>
<dbReference type="GO" id="GO:0003677">
    <property type="term" value="F:DNA binding"/>
    <property type="evidence" value="ECO:0000314"/>
    <property type="project" value="MGI"/>
</dbReference>
<dbReference type="GO" id="GO:0001228">
    <property type="term" value="F:DNA-binding transcription activator activity, RNA polymerase II-specific"/>
    <property type="evidence" value="ECO:0000314"/>
    <property type="project" value="MGI"/>
</dbReference>
<dbReference type="GO" id="GO:0000981">
    <property type="term" value="F:DNA-binding transcription factor activity, RNA polymerase II-specific"/>
    <property type="evidence" value="ECO:0000314"/>
    <property type="project" value="UniProtKB"/>
</dbReference>
<dbReference type="GO" id="GO:0001227">
    <property type="term" value="F:DNA-binding transcription repressor activity, RNA polymerase II-specific"/>
    <property type="evidence" value="ECO:0000250"/>
    <property type="project" value="UniProtKB"/>
</dbReference>
<dbReference type="GO" id="GO:0035035">
    <property type="term" value="F:histone acetyltransferase binding"/>
    <property type="evidence" value="ECO:0000353"/>
    <property type="project" value="UniProtKB"/>
</dbReference>
<dbReference type="GO" id="GO:0042826">
    <property type="term" value="F:histone deacetylase binding"/>
    <property type="evidence" value="ECO:0000353"/>
    <property type="project" value="UniProtKB"/>
</dbReference>
<dbReference type="GO" id="GO:0042802">
    <property type="term" value="F:identical protein binding"/>
    <property type="evidence" value="ECO:0000353"/>
    <property type="project" value="UniProtKB"/>
</dbReference>
<dbReference type="GO" id="GO:0019900">
    <property type="term" value="F:kinase binding"/>
    <property type="evidence" value="ECO:0000353"/>
    <property type="project" value="UniProtKB"/>
</dbReference>
<dbReference type="GO" id="GO:0035259">
    <property type="term" value="F:nuclear glucocorticoid receptor binding"/>
    <property type="evidence" value="ECO:0007669"/>
    <property type="project" value="Ensembl"/>
</dbReference>
<dbReference type="GO" id="GO:0046982">
    <property type="term" value="F:protein heterodimerization activity"/>
    <property type="evidence" value="ECO:0007669"/>
    <property type="project" value="Ensembl"/>
</dbReference>
<dbReference type="GO" id="GO:0042803">
    <property type="term" value="F:protein homodimerization activity"/>
    <property type="evidence" value="ECO:0007669"/>
    <property type="project" value="Ensembl"/>
</dbReference>
<dbReference type="GO" id="GO:0000978">
    <property type="term" value="F:RNA polymerase II cis-regulatory region sequence-specific DNA binding"/>
    <property type="evidence" value="ECO:0007669"/>
    <property type="project" value="Ensembl"/>
</dbReference>
<dbReference type="GO" id="GO:0000979">
    <property type="term" value="F:RNA polymerase II core promoter sequence-specific DNA binding"/>
    <property type="evidence" value="ECO:0000314"/>
    <property type="project" value="BHF-UCL"/>
</dbReference>
<dbReference type="GO" id="GO:0000977">
    <property type="term" value="F:RNA polymerase II transcription regulatory region sequence-specific DNA binding"/>
    <property type="evidence" value="ECO:0000266"/>
    <property type="project" value="MGI"/>
</dbReference>
<dbReference type="GO" id="GO:0043565">
    <property type="term" value="F:sequence-specific DNA binding"/>
    <property type="evidence" value="ECO:0000314"/>
    <property type="project" value="UniProtKB"/>
</dbReference>
<dbReference type="GO" id="GO:0000976">
    <property type="term" value="F:transcription cis-regulatory region binding"/>
    <property type="evidence" value="ECO:0000314"/>
    <property type="project" value="UniProtKB"/>
</dbReference>
<dbReference type="GO" id="GO:0044389">
    <property type="term" value="F:ubiquitin-like protein ligase binding"/>
    <property type="evidence" value="ECO:0000353"/>
    <property type="project" value="UniProtKB"/>
</dbReference>
<dbReference type="GO" id="GO:0050873">
    <property type="term" value="P:brown fat cell differentiation"/>
    <property type="evidence" value="ECO:0000315"/>
    <property type="project" value="UniProtKB"/>
</dbReference>
<dbReference type="GO" id="GO:0071230">
    <property type="term" value="P:cellular response to amino acid stimulus"/>
    <property type="evidence" value="ECO:0000314"/>
    <property type="project" value="MGI"/>
</dbReference>
<dbReference type="GO" id="GO:0071347">
    <property type="term" value="P:cellular response to interleukin-1"/>
    <property type="evidence" value="ECO:0007669"/>
    <property type="project" value="Ensembl"/>
</dbReference>
<dbReference type="GO" id="GO:0071222">
    <property type="term" value="P:cellular response to lipopolysaccharide"/>
    <property type="evidence" value="ECO:0007669"/>
    <property type="project" value="Ensembl"/>
</dbReference>
<dbReference type="GO" id="GO:0042742">
    <property type="term" value="P:defense response to bacterium"/>
    <property type="evidence" value="ECO:0000315"/>
    <property type="project" value="UniProtKB"/>
</dbReference>
<dbReference type="GO" id="GO:0001892">
    <property type="term" value="P:embryonic placenta development"/>
    <property type="evidence" value="ECO:0000316"/>
    <property type="project" value="MGI"/>
</dbReference>
<dbReference type="GO" id="GO:0045444">
    <property type="term" value="P:fat cell differentiation"/>
    <property type="evidence" value="ECO:0000314"/>
    <property type="project" value="MGI"/>
</dbReference>
<dbReference type="GO" id="GO:0002432">
    <property type="term" value="P:granuloma formation"/>
    <property type="evidence" value="ECO:0000315"/>
    <property type="project" value="UniProtKB"/>
</dbReference>
<dbReference type="GO" id="GO:0072574">
    <property type="term" value="P:hepatocyte proliferation"/>
    <property type="evidence" value="ECO:0000314"/>
    <property type="project" value="UniProtKB"/>
</dbReference>
<dbReference type="GO" id="GO:0070059">
    <property type="term" value="P:intrinsic apoptotic signaling pathway in response to endoplasmic reticulum stress"/>
    <property type="evidence" value="ECO:0000315"/>
    <property type="project" value="ParkinsonsUK-UCL"/>
</dbReference>
<dbReference type="GO" id="GO:0097421">
    <property type="term" value="P:liver regeneration"/>
    <property type="evidence" value="ECO:0000315"/>
    <property type="project" value="UniProtKB"/>
</dbReference>
<dbReference type="GO" id="GO:0060644">
    <property type="term" value="P:mammary gland epithelial cell differentiation"/>
    <property type="evidence" value="ECO:0000315"/>
    <property type="project" value="MGI"/>
</dbReference>
<dbReference type="GO" id="GO:0033598">
    <property type="term" value="P:mammary gland epithelial cell proliferation"/>
    <property type="evidence" value="ECO:0000315"/>
    <property type="project" value="MGI"/>
</dbReference>
<dbReference type="GO" id="GO:0007613">
    <property type="term" value="P:memory"/>
    <property type="evidence" value="ECO:0007669"/>
    <property type="project" value="Ensembl"/>
</dbReference>
<dbReference type="GO" id="GO:0061515">
    <property type="term" value="P:myeloid cell development"/>
    <property type="evidence" value="ECO:0000303"/>
    <property type="project" value="ComplexPortal"/>
</dbReference>
<dbReference type="GO" id="GO:0045892">
    <property type="term" value="P:negative regulation of DNA-templated transcription"/>
    <property type="evidence" value="ECO:0000314"/>
    <property type="project" value="MGI"/>
</dbReference>
<dbReference type="GO" id="GO:0043524">
    <property type="term" value="P:negative regulation of neuron apoptotic process"/>
    <property type="evidence" value="ECO:0000314"/>
    <property type="project" value="MGI"/>
</dbReference>
<dbReference type="GO" id="GO:0042130">
    <property type="term" value="P:negative regulation of T cell proliferation"/>
    <property type="evidence" value="ECO:0000314"/>
    <property type="project" value="UniProtKB"/>
</dbReference>
<dbReference type="GO" id="GO:0000122">
    <property type="term" value="P:negative regulation of transcription by RNA polymerase II"/>
    <property type="evidence" value="ECO:0000250"/>
    <property type="project" value="UniProtKB"/>
</dbReference>
<dbReference type="GO" id="GO:0030182">
    <property type="term" value="P:neuron differentiation"/>
    <property type="evidence" value="ECO:0000314"/>
    <property type="project" value="MGI"/>
</dbReference>
<dbReference type="GO" id="GO:0001541">
    <property type="term" value="P:ovarian follicle development"/>
    <property type="evidence" value="ECO:0000315"/>
    <property type="project" value="UniProtKB"/>
</dbReference>
<dbReference type="GO" id="GO:0070169">
    <property type="term" value="P:positive regulation of biomineral tissue development"/>
    <property type="evidence" value="ECO:0000266"/>
    <property type="project" value="MGI"/>
</dbReference>
<dbReference type="GO" id="GO:0120162">
    <property type="term" value="P:positive regulation of cold-induced thermogenesis"/>
    <property type="evidence" value="ECO:0000315"/>
    <property type="project" value="YuBioLab"/>
</dbReference>
<dbReference type="GO" id="GO:0045893">
    <property type="term" value="P:positive regulation of DNA-templated transcription"/>
    <property type="evidence" value="ECO:0000314"/>
    <property type="project" value="MGI"/>
</dbReference>
<dbReference type="GO" id="GO:0045600">
    <property type="term" value="P:positive regulation of fat cell differentiation"/>
    <property type="evidence" value="ECO:0000315"/>
    <property type="project" value="GO_Central"/>
</dbReference>
<dbReference type="GO" id="GO:0050729">
    <property type="term" value="P:positive regulation of inflammatory response"/>
    <property type="evidence" value="ECO:0000316"/>
    <property type="project" value="ARUK-UCL"/>
</dbReference>
<dbReference type="GO" id="GO:0032753">
    <property type="term" value="P:positive regulation of interleukin-4 production"/>
    <property type="evidence" value="ECO:0000314"/>
    <property type="project" value="UniProtKB"/>
</dbReference>
<dbReference type="GO" id="GO:0045669">
    <property type="term" value="P:positive regulation of osteoblast differentiation"/>
    <property type="evidence" value="ECO:0000314"/>
    <property type="project" value="MGI"/>
</dbReference>
<dbReference type="GO" id="GO:2000120">
    <property type="term" value="P:positive regulation of sodium-dependent phosphate transport"/>
    <property type="evidence" value="ECO:0000266"/>
    <property type="project" value="MGI"/>
</dbReference>
<dbReference type="GO" id="GO:0045944">
    <property type="term" value="P:positive regulation of transcription by RNA polymerase II"/>
    <property type="evidence" value="ECO:0000314"/>
    <property type="project" value="UniProtKB"/>
</dbReference>
<dbReference type="GO" id="GO:2001198">
    <property type="term" value="P:regulation of dendritic cell differentiation"/>
    <property type="evidence" value="ECO:0000316"/>
    <property type="project" value="ARUK-UCL"/>
</dbReference>
<dbReference type="GO" id="GO:0006355">
    <property type="term" value="P:regulation of DNA-templated transcription"/>
    <property type="evidence" value="ECO:0000250"/>
    <property type="project" value="UniProtKB"/>
</dbReference>
<dbReference type="GO" id="GO:0032675">
    <property type="term" value="P:regulation of interleukin-6 production"/>
    <property type="evidence" value="ECO:0000314"/>
    <property type="project" value="MGI"/>
</dbReference>
<dbReference type="GO" id="GO:1901329">
    <property type="term" value="P:regulation of odontoblast differentiation"/>
    <property type="evidence" value="ECO:0000250"/>
    <property type="project" value="UniProtKB"/>
</dbReference>
<dbReference type="GO" id="GO:0045670">
    <property type="term" value="P:regulation of osteoclast differentiation"/>
    <property type="evidence" value="ECO:0000314"/>
    <property type="project" value="UniProtKB"/>
</dbReference>
<dbReference type="GO" id="GO:0006357">
    <property type="term" value="P:regulation of transcription by RNA polymerase II"/>
    <property type="evidence" value="ECO:0000315"/>
    <property type="project" value="GO_Central"/>
</dbReference>
<dbReference type="GO" id="GO:0034976">
    <property type="term" value="P:response to endoplasmic reticulum stress"/>
    <property type="evidence" value="ECO:0000250"/>
    <property type="project" value="UniProtKB"/>
</dbReference>
<dbReference type="GO" id="GO:0032496">
    <property type="term" value="P:response to lipopolysaccharide"/>
    <property type="evidence" value="ECO:0000315"/>
    <property type="project" value="BHF-UCL"/>
</dbReference>
<dbReference type="GO" id="GO:0035711">
    <property type="term" value="P:T-helper 1 cell activation"/>
    <property type="evidence" value="ECO:0000315"/>
    <property type="project" value="UniProtKB"/>
</dbReference>
<dbReference type="GO" id="GO:0006366">
    <property type="term" value="P:transcription by RNA polymerase II"/>
    <property type="evidence" value="ECO:0000314"/>
    <property type="project" value="MGI"/>
</dbReference>
<dbReference type="CDD" id="cd14712">
    <property type="entry name" value="bZIP_CEBPB"/>
    <property type="match status" value="1"/>
</dbReference>
<dbReference type="FunFam" id="1.20.5.170:FF:000028">
    <property type="entry name" value="CCAAT/enhancer-binding protein beta"/>
    <property type="match status" value="1"/>
</dbReference>
<dbReference type="Gene3D" id="1.20.5.170">
    <property type="match status" value="1"/>
</dbReference>
<dbReference type="InterPro" id="IPR004827">
    <property type="entry name" value="bZIP"/>
</dbReference>
<dbReference type="InterPro" id="IPR046347">
    <property type="entry name" value="bZIP_sf"/>
</dbReference>
<dbReference type="InterPro" id="IPR031106">
    <property type="entry name" value="C/EBP"/>
</dbReference>
<dbReference type="InterPro" id="IPR016468">
    <property type="entry name" value="C/EBP_chordates"/>
</dbReference>
<dbReference type="PANTHER" id="PTHR23334">
    <property type="entry name" value="CCAAT/ENHANCER BINDING PROTEIN"/>
    <property type="match status" value="1"/>
</dbReference>
<dbReference type="PANTHER" id="PTHR23334:SF21">
    <property type="entry name" value="CCAAT_ENHANCER-BINDING PROTEIN BETA"/>
    <property type="match status" value="1"/>
</dbReference>
<dbReference type="Pfam" id="PF07716">
    <property type="entry name" value="bZIP_2"/>
    <property type="match status" value="1"/>
</dbReference>
<dbReference type="PIRSF" id="PIRSF005879">
    <property type="entry name" value="CCAAT/enhancer-binding"/>
    <property type="match status" value="1"/>
</dbReference>
<dbReference type="SMART" id="SM00338">
    <property type="entry name" value="BRLZ"/>
    <property type="match status" value="1"/>
</dbReference>
<dbReference type="SUPFAM" id="SSF57959">
    <property type="entry name" value="Leucine zipper domain"/>
    <property type="match status" value="1"/>
</dbReference>
<dbReference type="PROSITE" id="PS50217">
    <property type="entry name" value="BZIP"/>
    <property type="match status" value="1"/>
</dbReference>
<organism>
    <name type="scientific">Mus musculus</name>
    <name type="common">Mouse</name>
    <dbReference type="NCBI Taxonomy" id="10090"/>
    <lineage>
        <taxon>Eukaryota</taxon>
        <taxon>Metazoa</taxon>
        <taxon>Chordata</taxon>
        <taxon>Craniata</taxon>
        <taxon>Vertebrata</taxon>
        <taxon>Euteleostomi</taxon>
        <taxon>Mammalia</taxon>
        <taxon>Eutheria</taxon>
        <taxon>Euarchontoglires</taxon>
        <taxon>Glires</taxon>
        <taxon>Rodentia</taxon>
        <taxon>Myomorpha</taxon>
        <taxon>Muroidea</taxon>
        <taxon>Muridae</taxon>
        <taxon>Murinae</taxon>
        <taxon>Mus</taxon>
        <taxon>Mus</taxon>
    </lineage>
</organism>